<reference key="1">
    <citation type="journal article" date="2001" name="Science">
        <title>Complete genome sequence of a virulent isolate of Streptococcus pneumoniae.</title>
        <authorList>
            <person name="Tettelin H."/>
            <person name="Nelson K.E."/>
            <person name="Paulsen I.T."/>
            <person name="Eisen J.A."/>
            <person name="Read T.D."/>
            <person name="Peterson S.N."/>
            <person name="Heidelberg J.F."/>
            <person name="DeBoy R.T."/>
            <person name="Haft D.H."/>
            <person name="Dodson R.J."/>
            <person name="Durkin A.S."/>
            <person name="Gwinn M.L."/>
            <person name="Kolonay J.F."/>
            <person name="Nelson W.C."/>
            <person name="Peterson J.D."/>
            <person name="Umayam L.A."/>
            <person name="White O."/>
            <person name="Salzberg S.L."/>
            <person name="Lewis M.R."/>
            <person name="Radune D."/>
            <person name="Holtzapple E.K."/>
            <person name="Khouri H.M."/>
            <person name="Wolf A.M."/>
            <person name="Utterback T.R."/>
            <person name="Hansen C.L."/>
            <person name="McDonald L.A."/>
            <person name="Feldblyum T.V."/>
            <person name="Angiuoli S.V."/>
            <person name="Dickinson T."/>
            <person name="Hickey E.K."/>
            <person name="Holt I.E."/>
            <person name="Loftus B.J."/>
            <person name="Yang F."/>
            <person name="Smith H.O."/>
            <person name="Venter J.C."/>
            <person name="Dougherty B.A."/>
            <person name="Morrison D.A."/>
            <person name="Hollingshead S.K."/>
            <person name="Fraser C.M."/>
        </authorList>
    </citation>
    <scope>NUCLEOTIDE SEQUENCE [LARGE SCALE GENOMIC DNA]</scope>
    <source>
        <strain>ATCC BAA-334 / TIGR4</strain>
    </source>
</reference>
<accession>Q97QL1</accession>
<proteinExistence type="inferred from homology"/>
<comment type="catalytic activity">
    <reaction evidence="1">
        <text>aldehydo-D-galactose 6-phosphate = keto-D-tagatose 6-phosphate</text>
        <dbReference type="Rhea" id="RHEA:13033"/>
        <dbReference type="ChEBI" id="CHEBI:58255"/>
        <dbReference type="ChEBI" id="CHEBI:134283"/>
        <dbReference type="EC" id="5.3.1.26"/>
    </reaction>
</comment>
<comment type="pathway">
    <text evidence="1">Carbohydrate metabolism; D-galactose 6-phosphate degradation; D-tagatose 6-phosphate from D-galactose 6-phosphate: step 1/1.</text>
</comment>
<comment type="subunit">
    <text evidence="1">Heteromultimeric protein consisting of LacA and LacB.</text>
</comment>
<comment type="similarity">
    <text evidence="1">Belongs to the LacAB/RpiB family.</text>
</comment>
<gene>
    <name evidence="1" type="primary">lacB</name>
    <name type="ordered locus">SP_1192</name>
</gene>
<evidence type="ECO:0000255" key="1">
    <source>
        <dbReference type="HAMAP-Rule" id="MF_01556"/>
    </source>
</evidence>
<name>LACB_STRPN</name>
<organism>
    <name type="scientific">Streptococcus pneumoniae serotype 4 (strain ATCC BAA-334 / TIGR4)</name>
    <dbReference type="NCBI Taxonomy" id="170187"/>
    <lineage>
        <taxon>Bacteria</taxon>
        <taxon>Bacillati</taxon>
        <taxon>Bacillota</taxon>
        <taxon>Bacilli</taxon>
        <taxon>Lactobacillales</taxon>
        <taxon>Streptococcaceae</taxon>
        <taxon>Streptococcus</taxon>
    </lineage>
</organism>
<protein>
    <recommendedName>
        <fullName evidence="1">Galactose-6-phosphate isomerase subunit LacB</fullName>
        <ecNumber evidence="1">5.3.1.26</ecNumber>
    </recommendedName>
</protein>
<keyword id="KW-0413">Isomerase</keyword>
<keyword id="KW-0423">Lactose metabolism</keyword>
<keyword id="KW-1185">Reference proteome</keyword>
<dbReference type="EC" id="5.3.1.26" evidence="1"/>
<dbReference type="EMBL" id="AE005672">
    <property type="protein sequence ID" value="AAK75301.1"/>
    <property type="molecule type" value="Genomic_DNA"/>
</dbReference>
<dbReference type="PIR" id="D95138">
    <property type="entry name" value="D95138"/>
</dbReference>
<dbReference type="RefSeq" id="WP_001216918.1">
    <property type="nucleotide sequence ID" value="NZ_CP155539.1"/>
</dbReference>
<dbReference type="SMR" id="Q97QL1"/>
<dbReference type="PaxDb" id="170187-SP_1192"/>
<dbReference type="EnsemblBacteria" id="AAK75301">
    <property type="protein sequence ID" value="AAK75301"/>
    <property type="gene ID" value="SP_1192"/>
</dbReference>
<dbReference type="KEGG" id="spn:SP_1192"/>
<dbReference type="eggNOG" id="COG0698">
    <property type="taxonomic scope" value="Bacteria"/>
</dbReference>
<dbReference type="PhylomeDB" id="Q97QL1"/>
<dbReference type="BioCyc" id="SPNE170187:G1FZB-1209-MONOMER"/>
<dbReference type="UniPathway" id="UPA00702">
    <property type="reaction ID" value="UER00714"/>
</dbReference>
<dbReference type="Proteomes" id="UP000000585">
    <property type="component" value="Chromosome"/>
</dbReference>
<dbReference type="GO" id="GO:0050044">
    <property type="term" value="F:galactose-6-phosphate isomerase activity"/>
    <property type="evidence" value="ECO:0007669"/>
    <property type="project" value="UniProtKB-UniRule"/>
</dbReference>
<dbReference type="GO" id="GO:0004751">
    <property type="term" value="F:ribose-5-phosphate isomerase activity"/>
    <property type="evidence" value="ECO:0007669"/>
    <property type="project" value="TreeGrafter"/>
</dbReference>
<dbReference type="GO" id="GO:0019316">
    <property type="term" value="P:D-allose catabolic process"/>
    <property type="evidence" value="ECO:0007669"/>
    <property type="project" value="TreeGrafter"/>
</dbReference>
<dbReference type="GO" id="GO:0019388">
    <property type="term" value="P:galactose catabolic process"/>
    <property type="evidence" value="ECO:0007669"/>
    <property type="project" value="UniProtKB-UniPathway"/>
</dbReference>
<dbReference type="GO" id="GO:0019512">
    <property type="term" value="P:lactose catabolic process via tagatose-6-phosphate"/>
    <property type="evidence" value="ECO:0007669"/>
    <property type="project" value="UniProtKB-UniRule"/>
</dbReference>
<dbReference type="GO" id="GO:0009052">
    <property type="term" value="P:pentose-phosphate shunt, non-oxidative branch"/>
    <property type="evidence" value="ECO:0007669"/>
    <property type="project" value="TreeGrafter"/>
</dbReference>
<dbReference type="Gene3D" id="3.40.1400.10">
    <property type="entry name" value="Sugar-phosphate isomerase, RpiB/LacA/LacB"/>
    <property type="match status" value="1"/>
</dbReference>
<dbReference type="HAMAP" id="MF_01556">
    <property type="entry name" value="LacB"/>
    <property type="match status" value="1"/>
</dbReference>
<dbReference type="InterPro" id="IPR004784">
    <property type="entry name" value="LacB"/>
</dbReference>
<dbReference type="InterPro" id="IPR003500">
    <property type="entry name" value="RpiB_LacA_LacB"/>
</dbReference>
<dbReference type="InterPro" id="IPR036569">
    <property type="entry name" value="RpiB_LacA_LacB_sf"/>
</dbReference>
<dbReference type="NCBIfam" id="TIGR01119">
    <property type="entry name" value="lacB"/>
    <property type="match status" value="1"/>
</dbReference>
<dbReference type="NCBIfam" id="NF004051">
    <property type="entry name" value="PRK05571.1"/>
    <property type="match status" value="1"/>
</dbReference>
<dbReference type="NCBIfam" id="NF006381">
    <property type="entry name" value="PRK08622.1"/>
    <property type="match status" value="1"/>
</dbReference>
<dbReference type="NCBIfam" id="NF009258">
    <property type="entry name" value="PRK12615.1"/>
    <property type="match status" value="1"/>
</dbReference>
<dbReference type="NCBIfam" id="TIGR00689">
    <property type="entry name" value="rpiB_lacA_lacB"/>
    <property type="match status" value="1"/>
</dbReference>
<dbReference type="PANTHER" id="PTHR30345:SF0">
    <property type="entry name" value="DNA DAMAGE-REPAIR_TOLERATION PROTEIN DRT102"/>
    <property type="match status" value="1"/>
</dbReference>
<dbReference type="PANTHER" id="PTHR30345">
    <property type="entry name" value="RIBOSE-5-PHOSPHATE ISOMERASE B"/>
    <property type="match status" value="1"/>
</dbReference>
<dbReference type="Pfam" id="PF02502">
    <property type="entry name" value="LacAB_rpiB"/>
    <property type="match status" value="1"/>
</dbReference>
<dbReference type="PIRSF" id="PIRSF005384">
    <property type="entry name" value="RpiB_LacA_B"/>
    <property type="match status" value="1"/>
</dbReference>
<dbReference type="SUPFAM" id="SSF89623">
    <property type="entry name" value="Ribose/Galactose isomerase RpiB/AlsB"/>
    <property type="match status" value="1"/>
</dbReference>
<sequence length="171" mass="18958">MRIAIGCDHIVTDEKMAVSEFLKSKGYEVIDFGTYDHTRTHYPIFGKKVGEAVTSGQADLGVCICGTGVGINNAVNKVPGVRSALVRDMTTALYAKEQLNANVIGFGGKITGELLMCDIIEAFIHAEYKPTEENKKLIAKIEHVESHNAQQTDANFFTEFLEKWDRGEYHD</sequence>
<feature type="chain" id="PRO_0000208151" description="Galactose-6-phosphate isomerase subunit LacB">
    <location>
        <begin position="1"/>
        <end position="171"/>
    </location>
</feature>